<comment type="function">
    <text evidence="1">The coatomer is a cytosolic protein complex that binds to dilysine motifs and reversibly associates with Golgi non-clathrin-coated vesicles, which further mediate biosynthetic protein transport from the ER, via the Golgi up to the trans Golgi network. Coatomer complex is required for budding from Golgi membranes, and is essential for the retrograde Golgi-to-ER transport of dilysine-tagged proteins (By similarity).</text>
</comment>
<comment type="subunit">
    <text evidence="1">Oligomeric complex.</text>
</comment>
<comment type="subcellular location">
    <subcellularLocation>
        <location evidence="1">Cytoplasm</location>
    </subcellularLocation>
    <subcellularLocation>
        <location evidence="1">Golgi apparatus membrane</location>
        <topology evidence="1">Peripheral membrane protein</topology>
        <orientation evidence="1">Cytoplasmic side</orientation>
    </subcellularLocation>
    <subcellularLocation>
        <location evidence="1">Cytoplasmic vesicle</location>
        <location evidence="1">COPI-coated vesicle membrane</location>
        <topology evidence="1">Peripheral membrane protein</topology>
        <orientation evidence="1">Cytoplasmic side</orientation>
    </subcellularLocation>
</comment>
<comment type="similarity">
    <text evidence="3">Belongs to the COPG family.</text>
</comment>
<dbReference type="EMBL" id="AJ251323">
    <property type="protein sequence ID" value="CAB96534.1"/>
    <property type="molecule type" value="Genomic_DNA"/>
</dbReference>
<dbReference type="SMR" id="Q9I8E6"/>
<dbReference type="FunCoup" id="Q9I8E6">
    <property type="interactions" value="1839"/>
</dbReference>
<dbReference type="STRING" id="31033.ENSTRUP00000040385"/>
<dbReference type="eggNOG" id="KOG1078">
    <property type="taxonomic scope" value="Eukaryota"/>
</dbReference>
<dbReference type="InParanoid" id="Q9I8E6"/>
<dbReference type="OrthoDB" id="10265243at2759"/>
<dbReference type="Proteomes" id="UP000005226">
    <property type="component" value="Unplaced"/>
</dbReference>
<dbReference type="GO" id="GO:0030126">
    <property type="term" value="C:COPI vesicle coat"/>
    <property type="evidence" value="ECO:0007669"/>
    <property type="project" value="InterPro"/>
</dbReference>
<dbReference type="GO" id="GO:0005783">
    <property type="term" value="C:endoplasmic reticulum"/>
    <property type="evidence" value="ECO:0007669"/>
    <property type="project" value="TreeGrafter"/>
</dbReference>
<dbReference type="GO" id="GO:0005793">
    <property type="term" value="C:endoplasmic reticulum-Golgi intermediate compartment"/>
    <property type="evidence" value="ECO:0007669"/>
    <property type="project" value="TreeGrafter"/>
</dbReference>
<dbReference type="GO" id="GO:0000139">
    <property type="term" value="C:Golgi membrane"/>
    <property type="evidence" value="ECO:0007669"/>
    <property type="project" value="UniProtKB-SubCell"/>
</dbReference>
<dbReference type="GO" id="GO:0005198">
    <property type="term" value="F:structural molecule activity"/>
    <property type="evidence" value="ECO:0007669"/>
    <property type="project" value="InterPro"/>
</dbReference>
<dbReference type="GO" id="GO:0006888">
    <property type="term" value="P:endoplasmic reticulum to Golgi vesicle-mediated transport"/>
    <property type="evidence" value="ECO:0007669"/>
    <property type="project" value="TreeGrafter"/>
</dbReference>
<dbReference type="GO" id="GO:0006891">
    <property type="term" value="P:intra-Golgi vesicle-mediated transport"/>
    <property type="evidence" value="ECO:0007669"/>
    <property type="project" value="TreeGrafter"/>
</dbReference>
<dbReference type="GO" id="GO:0006886">
    <property type="term" value="P:intracellular protein transport"/>
    <property type="evidence" value="ECO:0007669"/>
    <property type="project" value="InterPro"/>
</dbReference>
<dbReference type="GO" id="GO:0072384">
    <property type="term" value="P:organelle transport along microtubule"/>
    <property type="evidence" value="ECO:0007669"/>
    <property type="project" value="TreeGrafter"/>
</dbReference>
<dbReference type="GO" id="GO:0009306">
    <property type="term" value="P:protein secretion"/>
    <property type="evidence" value="ECO:0007669"/>
    <property type="project" value="TreeGrafter"/>
</dbReference>
<dbReference type="FunFam" id="1.25.10.10:FF:000038">
    <property type="entry name" value="Coatomer subunit gamma"/>
    <property type="match status" value="1"/>
</dbReference>
<dbReference type="FunFam" id="1.25.10.10:FF:000071">
    <property type="entry name" value="Coatomer subunit gamma"/>
    <property type="match status" value="1"/>
</dbReference>
<dbReference type="FunFam" id="2.60.40.1480:FF:000001">
    <property type="entry name" value="Coatomer subunit gamma"/>
    <property type="match status" value="1"/>
</dbReference>
<dbReference type="FunFam" id="3.30.310.10:FF:000006">
    <property type="entry name" value="Coatomer subunit gamma"/>
    <property type="match status" value="1"/>
</dbReference>
<dbReference type="Gene3D" id="2.60.40.1480">
    <property type="entry name" value="Coatomer, gamma subunit, appendage domain"/>
    <property type="match status" value="1"/>
</dbReference>
<dbReference type="Gene3D" id="1.25.10.10">
    <property type="entry name" value="Leucine-rich Repeat Variant"/>
    <property type="match status" value="2"/>
</dbReference>
<dbReference type="Gene3D" id="3.30.310.10">
    <property type="entry name" value="TATA-Binding Protein"/>
    <property type="match status" value="1"/>
</dbReference>
<dbReference type="InterPro" id="IPR011989">
    <property type="entry name" value="ARM-like"/>
</dbReference>
<dbReference type="InterPro" id="IPR016024">
    <property type="entry name" value="ARM-type_fold"/>
</dbReference>
<dbReference type="InterPro" id="IPR002553">
    <property type="entry name" value="Clathrin/coatomer_adapt-like_N"/>
</dbReference>
<dbReference type="InterPro" id="IPR013041">
    <property type="entry name" value="Clathrin_app_Ig-like_sf"/>
</dbReference>
<dbReference type="InterPro" id="IPR009028">
    <property type="entry name" value="Coatomer/calthrin_app_sub_C"/>
</dbReference>
<dbReference type="InterPro" id="IPR032154">
    <property type="entry name" value="Coatomer_g_Cpla"/>
</dbReference>
<dbReference type="InterPro" id="IPR017106">
    <property type="entry name" value="Coatomer_gsu"/>
</dbReference>
<dbReference type="InterPro" id="IPR013040">
    <property type="entry name" value="Coatomer_gsu_app_Ig-like_dom"/>
</dbReference>
<dbReference type="InterPro" id="IPR037067">
    <property type="entry name" value="Coatomer_gsu_app_sf"/>
</dbReference>
<dbReference type="InterPro" id="IPR012295">
    <property type="entry name" value="TBP_dom_sf"/>
</dbReference>
<dbReference type="PANTHER" id="PTHR10261">
    <property type="entry name" value="COATOMER SUBUNIT GAMMA"/>
    <property type="match status" value="1"/>
</dbReference>
<dbReference type="PANTHER" id="PTHR10261:SF0">
    <property type="entry name" value="COATOMER SUBUNIT GAMMA-2"/>
    <property type="match status" value="1"/>
</dbReference>
<dbReference type="Pfam" id="PF01602">
    <property type="entry name" value="Adaptin_N"/>
    <property type="match status" value="1"/>
</dbReference>
<dbReference type="Pfam" id="PF16381">
    <property type="entry name" value="Coatomer_g_Cpla"/>
    <property type="match status" value="1"/>
</dbReference>
<dbReference type="Pfam" id="PF08752">
    <property type="entry name" value="COP-gamma_platf"/>
    <property type="match status" value="1"/>
</dbReference>
<dbReference type="PIRSF" id="PIRSF037093">
    <property type="entry name" value="Coatomer_gamma_subunit"/>
    <property type="match status" value="1"/>
</dbReference>
<dbReference type="SUPFAM" id="SSF48371">
    <property type="entry name" value="ARM repeat"/>
    <property type="match status" value="1"/>
</dbReference>
<dbReference type="SUPFAM" id="SSF49348">
    <property type="entry name" value="Clathrin adaptor appendage domain"/>
    <property type="match status" value="1"/>
</dbReference>
<dbReference type="SUPFAM" id="SSF55711">
    <property type="entry name" value="Subdomain of clathrin and coatomer appendage domain"/>
    <property type="match status" value="1"/>
</dbReference>
<reference key="1">
    <citation type="journal article" date="2000" name="Chromosome Res.">
        <title>Molecular cloning and characterization of the Fugu rubripes MEST/COPG2 imprinting cluster and chromosomal localization in Fugu and Tetraodon nigroviridis.</title>
        <authorList>
            <person name="Brunner B."/>
            <person name="Gruetzner F."/>
            <person name="Yaspo M.-L."/>
            <person name="Ropers H.-H."/>
            <person name="Haaf T."/>
            <person name="Kalscheuer V.M."/>
        </authorList>
    </citation>
    <scope>NUCLEOTIDE SEQUENCE [GENOMIC DNA]</scope>
</reference>
<protein>
    <recommendedName>
        <fullName>Coatomer subunit gamma-2</fullName>
    </recommendedName>
    <alternativeName>
        <fullName>Gamma-2-coat protein</fullName>
        <shortName>Gamma-2-COP</shortName>
    </alternativeName>
</protein>
<name>COPG2_TAKRU</name>
<keyword id="KW-0963">Cytoplasm</keyword>
<keyword id="KW-0968">Cytoplasmic vesicle</keyword>
<keyword id="KW-0931">ER-Golgi transport</keyword>
<keyword id="KW-0333">Golgi apparatus</keyword>
<keyword id="KW-0472">Membrane</keyword>
<keyword id="KW-0653">Protein transport</keyword>
<keyword id="KW-1185">Reference proteome</keyword>
<keyword id="KW-0677">Repeat</keyword>
<keyword id="KW-0813">Transport</keyword>
<proteinExistence type="inferred from homology"/>
<sequence length="873" mass="97470">MIKKFDKKDEESGSGSNPFQNLEKSAVLQEARIFNETPINPRRCLHILTKIIYLLNQGEHFGTTEATEAFFAMTRLFQSNDQTLRRMCYLTIKEMANISEDVIIVTSSLTKDMTGKEDVYRGPAIRALCRITDTTMLQAIERYMKQAIVDKVPSVSSSALVSSLHMVKMSYDVVKRWVNEAQEAASSDNIMVQYHALGLLYHLRKNDRLAVTKMLNKFTKSGLKSPFAYCMLIRIASKLLDETEAGHDSPLFDFIESCLRNKNEMVVYEAASAIVHMPNCTARELAPAVSVLQLFCSSPKAALRYAAVRTLNKVAMKHPSAVTACNLDLENLITDSNRSIATLAITTLLKTGSESSVDRLMKQISSFVSEISDEFKVVVVQAISALCQKYPRKHSAMMNFLSNMLRDDGGFEYKRAIVDCIISIIEENPESKETGLAHLCEFIEDCEHTVLATKILHLLGKEGPRTPQPSKYIRFIFNRVVLESEAVRAAAVSALAKFGAQNDDLLPSVLVLMQRCMMDSDDEVRDRATFYMNVLQQKQKALNAAYIFNGLSVSIPGLEKSLHQYTLEPSEKPFDMKSVPLATTPITEQKTEIAPAATSKLPEKLAPSRQDIYQEQLAAIPEFQGLGPLFKSSDPVQLTEAETEYVVRCIKHTFARHMVFQFDCTNTLNDQLLQKVLVQMEPSEAYEVIHYIPAPSLPYSQPGSCYSLVRLPDDDPTAVSCTFSCTMKYLVRDCDPNTGEPDDDGYDDEYVLEDLEVTVPDHIQKVLKPNFGAAWEEVGDEFEKEETFALASVRTLDEAVGNIISFLGMQPCERSDKVPENKNSHVLFLAGVFRGGHDVLVRARLALADGVTMQVTVRSSEETVVDVILASVG</sequence>
<gene>
    <name type="primary">copg2</name>
</gene>
<organism>
    <name type="scientific">Takifugu rubripes</name>
    <name type="common">Japanese pufferfish</name>
    <name type="synonym">Fugu rubripes</name>
    <dbReference type="NCBI Taxonomy" id="31033"/>
    <lineage>
        <taxon>Eukaryota</taxon>
        <taxon>Metazoa</taxon>
        <taxon>Chordata</taxon>
        <taxon>Craniata</taxon>
        <taxon>Vertebrata</taxon>
        <taxon>Euteleostomi</taxon>
        <taxon>Actinopterygii</taxon>
        <taxon>Neopterygii</taxon>
        <taxon>Teleostei</taxon>
        <taxon>Neoteleostei</taxon>
        <taxon>Acanthomorphata</taxon>
        <taxon>Eupercaria</taxon>
        <taxon>Tetraodontiformes</taxon>
        <taxon>Tetradontoidea</taxon>
        <taxon>Tetraodontidae</taxon>
        <taxon>Takifugu</taxon>
    </lineage>
</organism>
<feature type="chain" id="PRO_0000342520" description="Coatomer subunit gamma-2">
    <location>
        <begin position="1"/>
        <end position="873"/>
    </location>
</feature>
<feature type="repeat" description="HEAT 1">
    <location>
        <begin position="64"/>
        <end position="101"/>
    </location>
</feature>
<feature type="repeat" description="HEAT 2">
    <location>
        <begin position="283"/>
        <end position="320"/>
    </location>
</feature>
<feature type="repeat" description="HEAT 3">
    <location>
        <begin position="321"/>
        <end position="355"/>
    </location>
</feature>
<feature type="repeat" description="HEAT 4">
    <location>
        <begin position="356"/>
        <end position="392"/>
    </location>
</feature>
<feature type="repeat" description="HEAT 5">
    <location>
        <begin position="394"/>
        <end position="430"/>
    </location>
</feature>
<feature type="repeat" description="HEAT 6">
    <location>
        <begin position="467"/>
        <end position="504"/>
    </location>
</feature>
<feature type="region of interest" description="Disordered" evidence="2">
    <location>
        <begin position="1"/>
        <end position="21"/>
    </location>
</feature>
<feature type="compositionally biased region" description="Basic and acidic residues" evidence="2">
    <location>
        <begin position="1"/>
        <end position="11"/>
    </location>
</feature>
<accession>Q9I8E6</accession>
<evidence type="ECO:0000250" key="1"/>
<evidence type="ECO:0000256" key="2">
    <source>
        <dbReference type="SAM" id="MobiDB-lite"/>
    </source>
</evidence>
<evidence type="ECO:0000305" key="3"/>